<dbReference type="EMBL" id="M76666">
    <property type="protein sequence ID" value="AAA22806.1"/>
    <property type="molecule type" value="Genomic_DNA"/>
</dbReference>
<dbReference type="EMBL" id="Y15896">
    <property type="protein sequence ID" value="CAB75337.1"/>
    <property type="molecule type" value="Genomic_DNA"/>
</dbReference>
<dbReference type="EMBL" id="AL009126">
    <property type="protein sequence ID" value="CAB14727.1"/>
    <property type="molecule type" value="Genomic_DNA"/>
</dbReference>
<dbReference type="PIR" id="I39989">
    <property type="entry name" value="I39989"/>
</dbReference>
<dbReference type="RefSeq" id="NP_390645.1">
    <property type="nucleotide sequence ID" value="NC_000964.3"/>
</dbReference>
<dbReference type="RefSeq" id="WP_004398529.1">
    <property type="nucleotide sequence ID" value="NZ_OZ025638.1"/>
</dbReference>
<dbReference type="SMR" id="Q00758"/>
<dbReference type="FunCoup" id="Q00758">
    <property type="interactions" value="59"/>
</dbReference>
<dbReference type="STRING" id="224308.BSU27670"/>
<dbReference type="TCDB" id="2.A.66.2.14">
    <property type="family name" value="the multidrug/oligosaccharidyl-lipid/polysaccharide (mop) flippase superfamily"/>
</dbReference>
<dbReference type="PaxDb" id="224308-BSU27670"/>
<dbReference type="DNASU" id="938022"/>
<dbReference type="EnsemblBacteria" id="CAB14727">
    <property type="protein sequence ID" value="CAB14727"/>
    <property type="gene ID" value="BSU_27670"/>
</dbReference>
<dbReference type="GeneID" id="938022"/>
<dbReference type="KEGG" id="bsu:BSU27670"/>
<dbReference type="PATRIC" id="fig|224308.179.peg.3006"/>
<dbReference type="eggNOG" id="COG2244">
    <property type="taxonomic scope" value="Bacteria"/>
</dbReference>
<dbReference type="InParanoid" id="Q00758"/>
<dbReference type="OrthoDB" id="9775950at2"/>
<dbReference type="PhylomeDB" id="Q00758"/>
<dbReference type="BioCyc" id="BSUB:BSU27670-MONOMER"/>
<dbReference type="Proteomes" id="UP000001570">
    <property type="component" value="Chromosome"/>
</dbReference>
<dbReference type="GO" id="GO:0005886">
    <property type="term" value="C:plasma membrane"/>
    <property type="evidence" value="ECO:0000318"/>
    <property type="project" value="GO_Central"/>
</dbReference>
<dbReference type="GO" id="GO:0030435">
    <property type="term" value="P:sporulation resulting in formation of a cellular spore"/>
    <property type="evidence" value="ECO:0007669"/>
    <property type="project" value="UniProtKB-KW"/>
</dbReference>
<dbReference type="CDD" id="cd13124">
    <property type="entry name" value="MATE_SpoVB_like"/>
    <property type="match status" value="1"/>
</dbReference>
<dbReference type="InterPro" id="IPR024923">
    <property type="entry name" value="PG_synth_SpoVB"/>
</dbReference>
<dbReference type="InterPro" id="IPR050833">
    <property type="entry name" value="Poly_Biosynth_Transport"/>
</dbReference>
<dbReference type="InterPro" id="IPR002797">
    <property type="entry name" value="Polysacc_synth"/>
</dbReference>
<dbReference type="InterPro" id="IPR014249">
    <property type="entry name" value="Spore_V_B"/>
</dbReference>
<dbReference type="NCBIfam" id="TIGR02900">
    <property type="entry name" value="spore_V_B"/>
    <property type="match status" value="1"/>
</dbReference>
<dbReference type="PANTHER" id="PTHR30250">
    <property type="entry name" value="PST FAMILY PREDICTED COLANIC ACID TRANSPORTER"/>
    <property type="match status" value="1"/>
</dbReference>
<dbReference type="PANTHER" id="PTHR30250:SF24">
    <property type="entry name" value="STAGE V SPORULATION PROTEIN B"/>
    <property type="match status" value="1"/>
</dbReference>
<dbReference type="Pfam" id="PF01943">
    <property type="entry name" value="Polysacc_synt"/>
    <property type="match status" value="1"/>
</dbReference>
<dbReference type="PIRSF" id="PIRSF038958">
    <property type="entry name" value="PG_synth_SpoVB"/>
    <property type="match status" value="1"/>
</dbReference>
<reference key="1">
    <citation type="journal article" date="1991" name="J. Bacteriol.">
        <title>Cloning, characterization, and expression of the spoVB gene of Bacillus subtilis.</title>
        <authorList>
            <person name="Popham D.L."/>
            <person name="Stragier P."/>
        </authorList>
    </citation>
    <scope>NUCLEOTIDE SEQUENCE [GENOMIC DNA]</scope>
</reference>
<reference key="2">
    <citation type="submission" date="1997-12" db="EMBL/GenBank/DDBJ databases">
        <title>A 17.8 kb segment in the spoVB-nadC region of the Bacillus subtilis 168 chromosome: sequencing and ruv operon identification.</title>
        <authorList>
            <person name="Tosato V."/>
            <person name="Bolotin A."/>
            <person name="Bertani I."/>
            <person name="Valentino I."/>
            <person name="Bruschi C.V."/>
        </authorList>
    </citation>
    <scope>NUCLEOTIDE SEQUENCE [GENOMIC DNA]</scope>
    <source>
        <strain>168</strain>
    </source>
</reference>
<reference key="3">
    <citation type="journal article" date="1997" name="Nature">
        <title>The complete genome sequence of the Gram-positive bacterium Bacillus subtilis.</title>
        <authorList>
            <person name="Kunst F."/>
            <person name="Ogasawara N."/>
            <person name="Moszer I."/>
            <person name="Albertini A.M."/>
            <person name="Alloni G."/>
            <person name="Azevedo V."/>
            <person name="Bertero M.G."/>
            <person name="Bessieres P."/>
            <person name="Bolotin A."/>
            <person name="Borchert S."/>
            <person name="Borriss R."/>
            <person name="Boursier L."/>
            <person name="Brans A."/>
            <person name="Braun M."/>
            <person name="Brignell S.C."/>
            <person name="Bron S."/>
            <person name="Brouillet S."/>
            <person name="Bruschi C.V."/>
            <person name="Caldwell B."/>
            <person name="Capuano V."/>
            <person name="Carter N.M."/>
            <person name="Choi S.-K."/>
            <person name="Codani J.-J."/>
            <person name="Connerton I.F."/>
            <person name="Cummings N.J."/>
            <person name="Daniel R.A."/>
            <person name="Denizot F."/>
            <person name="Devine K.M."/>
            <person name="Duesterhoeft A."/>
            <person name="Ehrlich S.D."/>
            <person name="Emmerson P.T."/>
            <person name="Entian K.-D."/>
            <person name="Errington J."/>
            <person name="Fabret C."/>
            <person name="Ferrari E."/>
            <person name="Foulger D."/>
            <person name="Fritz C."/>
            <person name="Fujita M."/>
            <person name="Fujita Y."/>
            <person name="Fuma S."/>
            <person name="Galizzi A."/>
            <person name="Galleron N."/>
            <person name="Ghim S.-Y."/>
            <person name="Glaser P."/>
            <person name="Goffeau A."/>
            <person name="Golightly E.J."/>
            <person name="Grandi G."/>
            <person name="Guiseppi G."/>
            <person name="Guy B.J."/>
            <person name="Haga K."/>
            <person name="Haiech J."/>
            <person name="Harwood C.R."/>
            <person name="Henaut A."/>
            <person name="Hilbert H."/>
            <person name="Holsappel S."/>
            <person name="Hosono S."/>
            <person name="Hullo M.-F."/>
            <person name="Itaya M."/>
            <person name="Jones L.-M."/>
            <person name="Joris B."/>
            <person name="Karamata D."/>
            <person name="Kasahara Y."/>
            <person name="Klaerr-Blanchard M."/>
            <person name="Klein C."/>
            <person name="Kobayashi Y."/>
            <person name="Koetter P."/>
            <person name="Koningstein G."/>
            <person name="Krogh S."/>
            <person name="Kumano M."/>
            <person name="Kurita K."/>
            <person name="Lapidus A."/>
            <person name="Lardinois S."/>
            <person name="Lauber J."/>
            <person name="Lazarevic V."/>
            <person name="Lee S.-M."/>
            <person name="Levine A."/>
            <person name="Liu H."/>
            <person name="Masuda S."/>
            <person name="Mauel C."/>
            <person name="Medigue C."/>
            <person name="Medina N."/>
            <person name="Mellado R.P."/>
            <person name="Mizuno M."/>
            <person name="Moestl D."/>
            <person name="Nakai S."/>
            <person name="Noback M."/>
            <person name="Noone D."/>
            <person name="O'Reilly M."/>
            <person name="Ogawa K."/>
            <person name="Ogiwara A."/>
            <person name="Oudega B."/>
            <person name="Park S.-H."/>
            <person name="Parro V."/>
            <person name="Pohl T.M."/>
            <person name="Portetelle D."/>
            <person name="Porwollik S."/>
            <person name="Prescott A.M."/>
            <person name="Presecan E."/>
            <person name="Pujic P."/>
            <person name="Purnelle B."/>
            <person name="Rapoport G."/>
            <person name="Rey M."/>
            <person name="Reynolds S."/>
            <person name="Rieger M."/>
            <person name="Rivolta C."/>
            <person name="Rocha E."/>
            <person name="Roche B."/>
            <person name="Rose M."/>
            <person name="Sadaie Y."/>
            <person name="Sato T."/>
            <person name="Scanlan E."/>
            <person name="Schleich S."/>
            <person name="Schroeter R."/>
            <person name="Scoffone F."/>
            <person name="Sekiguchi J."/>
            <person name="Sekowska A."/>
            <person name="Seror S.J."/>
            <person name="Serror P."/>
            <person name="Shin B.-S."/>
            <person name="Soldo B."/>
            <person name="Sorokin A."/>
            <person name="Tacconi E."/>
            <person name="Takagi T."/>
            <person name="Takahashi H."/>
            <person name="Takemaru K."/>
            <person name="Takeuchi M."/>
            <person name="Tamakoshi A."/>
            <person name="Tanaka T."/>
            <person name="Terpstra P."/>
            <person name="Tognoni A."/>
            <person name="Tosato V."/>
            <person name="Uchiyama S."/>
            <person name="Vandenbol M."/>
            <person name="Vannier F."/>
            <person name="Vassarotti A."/>
            <person name="Viari A."/>
            <person name="Wambutt R."/>
            <person name="Wedler E."/>
            <person name="Wedler H."/>
            <person name="Weitzenegger T."/>
            <person name="Winters P."/>
            <person name="Wipat A."/>
            <person name="Yamamoto H."/>
            <person name="Yamane K."/>
            <person name="Yasumoto K."/>
            <person name="Yata K."/>
            <person name="Yoshida K."/>
            <person name="Yoshikawa H.-F."/>
            <person name="Zumstein E."/>
            <person name="Yoshikawa H."/>
            <person name="Danchin A."/>
        </authorList>
    </citation>
    <scope>NUCLEOTIDE SEQUENCE [LARGE SCALE GENOMIC DNA]</scope>
    <source>
        <strain>168</strain>
    </source>
</reference>
<organism>
    <name type="scientific">Bacillus subtilis (strain 168)</name>
    <dbReference type="NCBI Taxonomy" id="224308"/>
    <lineage>
        <taxon>Bacteria</taxon>
        <taxon>Bacillati</taxon>
        <taxon>Bacillota</taxon>
        <taxon>Bacilli</taxon>
        <taxon>Bacillales</taxon>
        <taxon>Bacillaceae</taxon>
        <taxon>Bacillus</taxon>
    </lineage>
</organism>
<evidence type="ECO:0000255" key="1"/>
<evidence type="ECO:0000305" key="2"/>
<protein>
    <recommendedName>
        <fullName>Stage V sporulation protein B</fullName>
    </recommendedName>
    <alternativeName>
        <fullName>Stage III sporulation protein F</fullName>
    </alternativeName>
</protein>
<proteinExistence type="evidence at transcript level"/>
<feature type="chain" id="PRO_0000166451" description="Stage V sporulation protein B">
    <location>
        <begin position="1"/>
        <end position="518"/>
    </location>
</feature>
<feature type="transmembrane region" description="Helical" evidence="1">
    <location>
        <begin position="6"/>
        <end position="26"/>
    </location>
</feature>
<feature type="transmembrane region" description="Helical" evidence="1">
    <location>
        <begin position="45"/>
        <end position="65"/>
    </location>
</feature>
<feature type="transmembrane region" description="Helical" evidence="1">
    <location>
        <begin position="91"/>
        <end position="111"/>
    </location>
</feature>
<feature type="transmembrane region" description="Helical" evidence="1">
    <location>
        <begin position="120"/>
        <end position="140"/>
    </location>
</feature>
<feature type="transmembrane region" description="Helical" evidence="1">
    <location>
        <begin position="165"/>
        <end position="185"/>
    </location>
</feature>
<feature type="transmembrane region" description="Helical" evidence="1">
    <location>
        <begin position="186"/>
        <end position="206"/>
    </location>
</feature>
<feature type="transmembrane region" description="Helical" evidence="1">
    <location>
        <begin position="250"/>
        <end position="270"/>
    </location>
</feature>
<feature type="transmembrane region" description="Helical" evidence="1">
    <location>
        <begin position="281"/>
        <end position="301"/>
    </location>
</feature>
<feature type="transmembrane region" description="Helical" evidence="1">
    <location>
        <begin position="326"/>
        <end position="346"/>
    </location>
</feature>
<feature type="transmembrane region" description="Helical" evidence="1">
    <location>
        <begin position="348"/>
        <end position="368"/>
    </location>
</feature>
<feature type="transmembrane region" description="Helical" evidence="1">
    <location>
        <begin position="387"/>
        <end position="407"/>
    </location>
</feature>
<feature type="transmembrane region" description="Helical" evidence="1">
    <location>
        <begin position="411"/>
        <end position="431"/>
    </location>
</feature>
<feature type="transmembrane region" description="Helical" evidence="1">
    <location>
        <begin position="446"/>
        <end position="466"/>
    </location>
</feature>
<feature type="transmembrane region" description="Helical" evidence="1">
    <location>
        <begin position="478"/>
        <end position="498"/>
    </location>
</feature>
<comment type="function">
    <text>Involved, directly or indirectly, in spore cortex biosynthesis. Affects only indirectly the expression of late sporulation genes.</text>
</comment>
<comment type="subcellular location">
    <subcellularLocation>
        <location evidence="2">Cell membrane</location>
        <topology evidence="2">Multi-pass membrane protein</topology>
    </subcellularLocation>
</comment>
<comment type="developmental stage">
    <text>SpoVB transcription takes place during the second hour of sporulation. It may be transcribed mainly, if not only, in the mother cell. Indeed, it is required only in the mother cell.</text>
</comment>
<comment type="similarity">
    <text evidence="2">Belongs to the polysaccharide synthase family.</text>
</comment>
<keyword id="KW-1003">Cell membrane</keyword>
<keyword id="KW-0472">Membrane</keyword>
<keyword id="KW-1185">Reference proteome</keyword>
<keyword id="KW-0749">Sporulation</keyword>
<keyword id="KW-0812">Transmembrane</keyword>
<keyword id="KW-1133">Transmembrane helix</keyword>
<gene>
    <name type="primary">spoVB</name>
    <name type="synonym">spoIIIF</name>
    <name type="ordered locus">BSU27670</name>
</gene>
<accession>Q00758</accession>
<name>SP5B_BACSU</name>
<sequence length="518" mass="56079">MAKQTFLKGTLILIAAGMVTRMLGFVNRVVIARFIGEEGVGLYMMAAPTFFLATTLTQFGLPVAISKLVAEASARGDHQKTKNILVMSLTITGVLSLIFTPLFLFFAPVMAETMLTDKRTLYPLLAITPVVPIIAISSVLRGYFQGKQNMNPLAMSQVLEQVVRISLVAVCTTIFLPYGIEYAAAGAMLSSVAGELASLLYLFVCFKYKKTIKIRKHFLQSIKNGKQTFTQLMSVSLPTTGSRFIGNLSWFFEPIVVAQSLAIAGVATVAATKQYGELTGFAMTLLTLPSFITYSLSTALVPAISEGMEQKKLQVVEYRLEQAMRLCLLSGGISVVILFVFADELMRVMYGSSGAAVFIKVMAPFFLLYYFQGPLQAVLQALNLAGAAMMNSLIGALVKTGLIFVLATRPSLGIMGAALAIVTGMVLVTLLHAATVSKVLPISIKIKEYALSFAVIVICGFISSAIKQYISFGASEAVNLAGWIAASAAIYMILLLVFRLIKKDELRRIPIIGRLIIR</sequence>